<sequence length="277" mass="30255">MKEPPVQLDLPDNPWLELRRLTPARIALGRTGTSIPTNAQLDFQFAHAQARDAVHLPFDPAGLSSQLAERGRDSLLLHSAAADRHSYLQRPDLGRRLSDESAQALRDHASANPGGVDLAVVVADGLSALAVHKHTLPFLTRMEEQTHAEGWSLSPVILVEQGRVAVADEIGQLLGAKMVVILIGERPGLSSPDSLGLYFTYNPKVGLTDAYRNCISNVRLEGLSYGMAAHRLLYLMREACRRQLSGVNLKDEAQVQTLESDDPDLMKGNFLLSSPDD</sequence>
<organism>
    <name type="scientific">Pseudomonas fluorescens (strain SBW25)</name>
    <dbReference type="NCBI Taxonomy" id="216595"/>
    <lineage>
        <taxon>Bacteria</taxon>
        <taxon>Pseudomonadati</taxon>
        <taxon>Pseudomonadota</taxon>
        <taxon>Gammaproteobacteria</taxon>
        <taxon>Pseudomonadales</taxon>
        <taxon>Pseudomonadaceae</taxon>
        <taxon>Pseudomonas</taxon>
    </lineage>
</organism>
<accession>C3K2P6</accession>
<keyword id="KW-1283">Bacterial microcompartment</keyword>
<keyword id="KW-0846">Cobalamin</keyword>
<keyword id="KW-0170">Cobalt</keyword>
<keyword id="KW-0456">Lyase</keyword>
<evidence type="ECO:0000255" key="1">
    <source>
        <dbReference type="HAMAP-Rule" id="MF_00601"/>
    </source>
</evidence>
<feature type="chain" id="PRO_1000212216" description="Ethanolamine ammonia-lyase small subunit">
    <location>
        <begin position="1"/>
        <end position="277"/>
    </location>
</feature>
<feature type="binding site" evidence="1">
    <location>
        <position position="164"/>
    </location>
    <ligand>
        <name>adenosylcob(III)alamin</name>
        <dbReference type="ChEBI" id="CHEBI:18408"/>
    </ligand>
</feature>
<feature type="binding site" evidence="1">
    <location>
        <position position="185"/>
    </location>
    <ligand>
        <name>adenosylcob(III)alamin</name>
        <dbReference type="ChEBI" id="CHEBI:18408"/>
    </ligand>
</feature>
<feature type="binding site" evidence="1">
    <location>
        <position position="214"/>
    </location>
    <ligand>
        <name>adenosylcob(III)alamin</name>
        <dbReference type="ChEBI" id="CHEBI:18408"/>
    </ligand>
</feature>
<gene>
    <name evidence="1" type="primary">eutC</name>
    <name type="ordered locus">PFLU_5444</name>
</gene>
<dbReference type="EC" id="4.3.1.7" evidence="1"/>
<dbReference type="EMBL" id="AM181176">
    <property type="protein sequence ID" value="CAY52636.1"/>
    <property type="molecule type" value="Genomic_DNA"/>
</dbReference>
<dbReference type="RefSeq" id="WP_015886084.1">
    <property type="nucleotide sequence ID" value="NC_012660.1"/>
</dbReference>
<dbReference type="SMR" id="C3K2P6"/>
<dbReference type="STRING" id="294.SRM1_05068"/>
<dbReference type="PATRIC" id="fig|216595.4.peg.5567"/>
<dbReference type="eggNOG" id="COG4302">
    <property type="taxonomic scope" value="Bacteria"/>
</dbReference>
<dbReference type="HOGENOM" id="CLU_068224_1_0_6"/>
<dbReference type="OrthoDB" id="114248at2"/>
<dbReference type="UniPathway" id="UPA00560"/>
<dbReference type="GO" id="GO:0009350">
    <property type="term" value="C:ethanolamine ammonia-lyase complex"/>
    <property type="evidence" value="ECO:0007669"/>
    <property type="project" value="UniProtKB-UniRule"/>
</dbReference>
<dbReference type="GO" id="GO:0031471">
    <property type="term" value="C:ethanolamine degradation polyhedral organelle"/>
    <property type="evidence" value="ECO:0007669"/>
    <property type="project" value="UniProtKB-UniRule"/>
</dbReference>
<dbReference type="GO" id="GO:0031419">
    <property type="term" value="F:cobalamin binding"/>
    <property type="evidence" value="ECO:0007669"/>
    <property type="project" value="UniProtKB-UniRule"/>
</dbReference>
<dbReference type="GO" id="GO:0008851">
    <property type="term" value="F:ethanolamine ammonia-lyase activity"/>
    <property type="evidence" value="ECO:0007669"/>
    <property type="project" value="UniProtKB-UniRule"/>
</dbReference>
<dbReference type="GO" id="GO:0006520">
    <property type="term" value="P:amino acid metabolic process"/>
    <property type="evidence" value="ECO:0007669"/>
    <property type="project" value="InterPro"/>
</dbReference>
<dbReference type="GO" id="GO:0046336">
    <property type="term" value="P:ethanolamine catabolic process"/>
    <property type="evidence" value="ECO:0007669"/>
    <property type="project" value="UniProtKB-UniRule"/>
</dbReference>
<dbReference type="FunFam" id="1.10.30.40:FF:000001">
    <property type="entry name" value="Ethanolamine ammonia-lyase light chain"/>
    <property type="match status" value="1"/>
</dbReference>
<dbReference type="FunFam" id="3.40.50.11240:FF:000001">
    <property type="entry name" value="Ethanolamine ammonia-lyase light chain"/>
    <property type="match status" value="1"/>
</dbReference>
<dbReference type="Gene3D" id="3.40.50.11240">
    <property type="entry name" value="Ethanolamine ammonia-lyase light chain (EutC)"/>
    <property type="match status" value="1"/>
</dbReference>
<dbReference type="Gene3D" id="1.10.30.40">
    <property type="entry name" value="Ethanolamine ammonia-lyase light chain (EutC), N-terminal domain"/>
    <property type="match status" value="1"/>
</dbReference>
<dbReference type="HAMAP" id="MF_00601">
    <property type="entry name" value="EutC"/>
    <property type="match status" value="1"/>
</dbReference>
<dbReference type="InterPro" id="IPR009246">
    <property type="entry name" value="EutC"/>
</dbReference>
<dbReference type="InterPro" id="IPR042251">
    <property type="entry name" value="EutC_C"/>
</dbReference>
<dbReference type="InterPro" id="IPR042255">
    <property type="entry name" value="EutC_N"/>
</dbReference>
<dbReference type="NCBIfam" id="NF003971">
    <property type="entry name" value="PRK05465.1"/>
    <property type="match status" value="1"/>
</dbReference>
<dbReference type="PANTHER" id="PTHR39330">
    <property type="entry name" value="ETHANOLAMINE AMMONIA-LYASE LIGHT CHAIN"/>
    <property type="match status" value="1"/>
</dbReference>
<dbReference type="PANTHER" id="PTHR39330:SF1">
    <property type="entry name" value="ETHANOLAMINE AMMONIA-LYASE SMALL SUBUNIT"/>
    <property type="match status" value="1"/>
</dbReference>
<dbReference type="Pfam" id="PF05985">
    <property type="entry name" value="EutC"/>
    <property type="match status" value="1"/>
</dbReference>
<dbReference type="PIRSF" id="PIRSF018982">
    <property type="entry name" value="EutC"/>
    <property type="match status" value="1"/>
</dbReference>
<comment type="function">
    <text evidence="1">Catalyzes the deamination of various vicinal amino-alcohols to oxo compounds. Allows this organism to utilize ethanolamine as the sole source of nitrogen and carbon in the presence of external vitamin B12.</text>
</comment>
<comment type="catalytic activity">
    <reaction evidence="1">
        <text>ethanolamine = acetaldehyde + NH4(+)</text>
        <dbReference type="Rhea" id="RHEA:15313"/>
        <dbReference type="ChEBI" id="CHEBI:15343"/>
        <dbReference type="ChEBI" id="CHEBI:28938"/>
        <dbReference type="ChEBI" id="CHEBI:57603"/>
        <dbReference type="EC" id="4.3.1.7"/>
    </reaction>
</comment>
<comment type="cofactor">
    <cofactor evidence="1">
        <name>adenosylcob(III)alamin</name>
        <dbReference type="ChEBI" id="CHEBI:18408"/>
    </cofactor>
    <text evidence="1">Binds between the large and small subunits.</text>
</comment>
<comment type="pathway">
    <text evidence="1">Amine and polyamine degradation; ethanolamine degradation.</text>
</comment>
<comment type="subunit">
    <text evidence="1">The basic unit is a heterodimer which dimerizes to form tetramers. The heterotetramers trimerize; 6 large subunits form a core ring with 6 small subunits projecting outwards.</text>
</comment>
<comment type="subcellular location">
    <subcellularLocation>
        <location evidence="1">Bacterial microcompartment</location>
    </subcellularLocation>
</comment>
<comment type="similarity">
    <text evidence="1">Belongs to the EutC family.</text>
</comment>
<protein>
    <recommendedName>
        <fullName evidence="1">Ethanolamine ammonia-lyase small subunit</fullName>
        <shortName evidence="1">EAL small subunit</shortName>
        <ecNumber evidence="1">4.3.1.7</ecNumber>
    </recommendedName>
</protein>
<proteinExistence type="inferred from homology"/>
<reference key="1">
    <citation type="journal article" date="2009" name="Genome Biol.">
        <title>Genomic and genetic analyses of diversity and plant interactions of Pseudomonas fluorescens.</title>
        <authorList>
            <person name="Silby M.W."/>
            <person name="Cerdeno-Tarraga A.M."/>
            <person name="Vernikos G.S."/>
            <person name="Giddens S.R."/>
            <person name="Jackson R.W."/>
            <person name="Preston G.M."/>
            <person name="Zhang X.-X."/>
            <person name="Moon C.D."/>
            <person name="Gehrig S.M."/>
            <person name="Godfrey S.A.C."/>
            <person name="Knight C.G."/>
            <person name="Malone J.G."/>
            <person name="Robinson Z."/>
            <person name="Spiers A.J."/>
            <person name="Harris S."/>
            <person name="Challis G.L."/>
            <person name="Yaxley A.M."/>
            <person name="Harris D."/>
            <person name="Seeger K."/>
            <person name="Murphy L."/>
            <person name="Rutter S."/>
            <person name="Squares R."/>
            <person name="Quail M.A."/>
            <person name="Saunders E."/>
            <person name="Mavromatis K."/>
            <person name="Brettin T.S."/>
            <person name="Bentley S.D."/>
            <person name="Hothersall J."/>
            <person name="Stephens E."/>
            <person name="Thomas C.M."/>
            <person name="Parkhill J."/>
            <person name="Levy S.B."/>
            <person name="Rainey P.B."/>
            <person name="Thomson N.R."/>
        </authorList>
    </citation>
    <scope>NUCLEOTIDE SEQUENCE [LARGE SCALE GENOMIC DNA]</scope>
    <source>
        <strain>SBW25</strain>
    </source>
</reference>
<name>EUTC_PSEFS</name>